<keyword id="KW-1185">Reference proteome</keyword>
<keyword id="KW-0678">Repressor</keyword>
<keyword id="KW-0687">Ribonucleoprotein</keyword>
<keyword id="KW-0689">Ribosomal protein</keyword>
<keyword id="KW-0694">RNA-binding</keyword>
<keyword id="KW-0699">rRNA-binding</keyword>
<keyword id="KW-0810">Translation regulation</keyword>
<keyword id="KW-0820">tRNA-binding</keyword>
<protein>
    <recommendedName>
        <fullName evidence="1">Large ribosomal subunit protein uL1</fullName>
    </recommendedName>
    <alternativeName>
        <fullName evidence="2">50S ribosomal protein L1</fullName>
    </alternativeName>
</protein>
<evidence type="ECO:0000255" key="1">
    <source>
        <dbReference type="HAMAP-Rule" id="MF_01318"/>
    </source>
</evidence>
<evidence type="ECO:0000305" key="2"/>
<accession>A7ZUJ7</accession>
<feature type="chain" id="PRO_1000067528" description="Large ribosomal subunit protein uL1">
    <location>
        <begin position="1"/>
        <end position="234"/>
    </location>
</feature>
<reference key="1">
    <citation type="journal article" date="2008" name="J. Bacteriol.">
        <title>The pangenome structure of Escherichia coli: comparative genomic analysis of E. coli commensal and pathogenic isolates.</title>
        <authorList>
            <person name="Rasko D.A."/>
            <person name="Rosovitz M.J."/>
            <person name="Myers G.S.A."/>
            <person name="Mongodin E.F."/>
            <person name="Fricke W.F."/>
            <person name="Gajer P."/>
            <person name="Crabtree J."/>
            <person name="Sebaihia M."/>
            <person name="Thomson N.R."/>
            <person name="Chaudhuri R."/>
            <person name="Henderson I.R."/>
            <person name="Sperandio V."/>
            <person name="Ravel J."/>
        </authorList>
    </citation>
    <scope>NUCLEOTIDE SEQUENCE [LARGE SCALE GENOMIC DNA]</scope>
    <source>
        <strain>E24377A / ETEC</strain>
    </source>
</reference>
<gene>
    <name evidence="1" type="primary">rplA</name>
    <name type="ordered locus">EcE24377A_4524</name>
</gene>
<name>RL1_ECO24</name>
<proteinExistence type="inferred from homology"/>
<sequence length="234" mass="24730">MAKLTKRMRVIREKVDATKQYDINEAIALLKELATAKFVESVDVAVNLGIDARKSDQNVRGATVLPHGTGRSVRVAVFTQGANAEAAKAAGAELVGMEDLADQIKKGEMNFDVVIASPDAMRVVGQLGQVLGPRGLMPNPKVGTVTPNVAEAVKNAKAGQVRYRNDKNGIIHTTIGKVDFDADKLKENLEALLVALKKAKPTQAKGVYIKKVSISTTMGAGVAVDQAGLSASVN</sequence>
<dbReference type="EMBL" id="CP000800">
    <property type="protein sequence ID" value="ABV19284.1"/>
    <property type="molecule type" value="Genomic_DNA"/>
</dbReference>
<dbReference type="RefSeq" id="WP_001096684.1">
    <property type="nucleotide sequence ID" value="NC_009801.1"/>
</dbReference>
<dbReference type="SMR" id="A7ZUJ7"/>
<dbReference type="GeneID" id="93777910"/>
<dbReference type="KEGG" id="ecw:EcE24377A_4524"/>
<dbReference type="HOGENOM" id="CLU_062853_0_0_6"/>
<dbReference type="Proteomes" id="UP000001122">
    <property type="component" value="Chromosome"/>
</dbReference>
<dbReference type="GO" id="GO:0022625">
    <property type="term" value="C:cytosolic large ribosomal subunit"/>
    <property type="evidence" value="ECO:0007669"/>
    <property type="project" value="TreeGrafter"/>
</dbReference>
<dbReference type="GO" id="GO:0019843">
    <property type="term" value="F:rRNA binding"/>
    <property type="evidence" value="ECO:0007669"/>
    <property type="project" value="UniProtKB-UniRule"/>
</dbReference>
<dbReference type="GO" id="GO:0003735">
    <property type="term" value="F:structural constituent of ribosome"/>
    <property type="evidence" value="ECO:0007669"/>
    <property type="project" value="InterPro"/>
</dbReference>
<dbReference type="GO" id="GO:0000049">
    <property type="term" value="F:tRNA binding"/>
    <property type="evidence" value="ECO:0007669"/>
    <property type="project" value="UniProtKB-KW"/>
</dbReference>
<dbReference type="GO" id="GO:0006417">
    <property type="term" value="P:regulation of translation"/>
    <property type="evidence" value="ECO:0007669"/>
    <property type="project" value="UniProtKB-KW"/>
</dbReference>
<dbReference type="GO" id="GO:0006412">
    <property type="term" value="P:translation"/>
    <property type="evidence" value="ECO:0007669"/>
    <property type="project" value="UniProtKB-UniRule"/>
</dbReference>
<dbReference type="CDD" id="cd00403">
    <property type="entry name" value="Ribosomal_L1"/>
    <property type="match status" value="1"/>
</dbReference>
<dbReference type="FunFam" id="3.40.50.790:FF:000001">
    <property type="entry name" value="50S ribosomal protein L1"/>
    <property type="match status" value="1"/>
</dbReference>
<dbReference type="Gene3D" id="3.30.190.20">
    <property type="match status" value="1"/>
</dbReference>
<dbReference type="Gene3D" id="3.40.50.790">
    <property type="match status" value="1"/>
</dbReference>
<dbReference type="HAMAP" id="MF_01318_B">
    <property type="entry name" value="Ribosomal_uL1_B"/>
    <property type="match status" value="1"/>
</dbReference>
<dbReference type="InterPro" id="IPR005878">
    <property type="entry name" value="Ribosom_uL1_bac-type"/>
</dbReference>
<dbReference type="InterPro" id="IPR002143">
    <property type="entry name" value="Ribosomal_uL1"/>
</dbReference>
<dbReference type="InterPro" id="IPR023674">
    <property type="entry name" value="Ribosomal_uL1-like"/>
</dbReference>
<dbReference type="InterPro" id="IPR028364">
    <property type="entry name" value="Ribosomal_uL1/biogenesis"/>
</dbReference>
<dbReference type="InterPro" id="IPR016095">
    <property type="entry name" value="Ribosomal_uL1_3-a/b-sand"/>
</dbReference>
<dbReference type="InterPro" id="IPR023673">
    <property type="entry name" value="Ribosomal_uL1_CS"/>
</dbReference>
<dbReference type="NCBIfam" id="TIGR01169">
    <property type="entry name" value="rplA_bact"/>
    <property type="match status" value="1"/>
</dbReference>
<dbReference type="PANTHER" id="PTHR36427">
    <property type="entry name" value="54S RIBOSOMAL PROTEIN L1, MITOCHONDRIAL"/>
    <property type="match status" value="1"/>
</dbReference>
<dbReference type="PANTHER" id="PTHR36427:SF3">
    <property type="entry name" value="LARGE RIBOSOMAL SUBUNIT PROTEIN UL1M"/>
    <property type="match status" value="1"/>
</dbReference>
<dbReference type="Pfam" id="PF00687">
    <property type="entry name" value="Ribosomal_L1"/>
    <property type="match status" value="1"/>
</dbReference>
<dbReference type="PIRSF" id="PIRSF002155">
    <property type="entry name" value="Ribosomal_L1"/>
    <property type="match status" value="1"/>
</dbReference>
<dbReference type="SUPFAM" id="SSF56808">
    <property type="entry name" value="Ribosomal protein L1"/>
    <property type="match status" value="1"/>
</dbReference>
<dbReference type="PROSITE" id="PS01199">
    <property type="entry name" value="RIBOSOMAL_L1"/>
    <property type="match status" value="1"/>
</dbReference>
<organism>
    <name type="scientific">Escherichia coli O139:H28 (strain E24377A / ETEC)</name>
    <dbReference type="NCBI Taxonomy" id="331111"/>
    <lineage>
        <taxon>Bacteria</taxon>
        <taxon>Pseudomonadati</taxon>
        <taxon>Pseudomonadota</taxon>
        <taxon>Gammaproteobacteria</taxon>
        <taxon>Enterobacterales</taxon>
        <taxon>Enterobacteriaceae</taxon>
        <taxon>Escherichia</taxon>
    </lineage>
</organism>
<comment type="function">
    <text evidence="1">Binds directly to 23S rRNA. The L1 stalk is quite mobile in the ribosome, and is involved in E site tRNA release.</text>
</comment>
<comment type="function">
    <text evidence="1">Protein L1 is also a translational repressor protein, it controls the translation of the L11 operon by binding to its mRNA.</text>
</comment>
<comment type="subunit">
    <text evidence="1">Part of the 50S ribosomal subunit.</text>
</comment>
<comment type="similarity">
    <text evidence="1">Belongs to the universal ribosomal protein uL1 family.</text>
</comment>